<gene>
    <name type="primary">Amyrel</name>
</gene>
<organism>
    <name type="scientific">Drosophila atripex</name>
    <name type="common">Fruit fly</name>
    <dbReference type="NCBI Taxonomy" id="60715"/>
    <lineage>
        <taxon>Eukaryota</taxon>
        <taxon>Metazoa</taxon>
        <taxon>Ecdysozoa</taxon>
        <taxon>Arthropoda</taxon>
        <taxon>Hexapoda</taxon>
        <taxon>Insecta</taxon>
        <taxon>Pterygota</taxon>
        <taxon>Neoptera</taxon>
        <taxon>Endopterygota</taxon>
        <taxon>Diptera</taxon>
        <taxon>Brachycera</taxon>
        <taxon>Muscomorpha</taxon>
        <taxon>Ephydroidea</taxon>
        <taxon>Drosophilidae</taxon>
        <taxon>Drosophila</taxon>
        <taxon>Sophophora</taxon>
    </lineage>
</organism>
<sequence length="494" mass="55505">MFKFAAAVILCLVAASSTLAQHNPHWWGNRNTIVHLFEWKWSDIAAECESFLGPRGFAGVQVSPVNENIISAGRPWWERYQPISYKLVTRSGNEQEFADMVRRCNDVGVRIYVDVLLNHMSGDFDGIAVGTAGSEAEPSKKSYPGVPYSALDFHPTCEITDWNDRFQVQQCELVGLKDLDQSSEWVRSKLIEFLDHLIELGVAGFRVDAAKHMAADDLSYIYSSISDLNIEHGFPHNARPFIFQEVIDHGHETVSREEYNQLGAVTEFRFSEEIGNAFRGNNALKWLQSWGTGWGFLPSGQALTFVDNHDNQRDMGAVLNYKSPKQYKMATAFHLAYPYGISRVMSSFAFDDHDTAPPQDEQERIISPEFDEEGACVNGWICEHRWRQIYAMVGFKNAVRDTELSNWWDNGDNQISFCRGNKGFLAVNNNLYDLSRELQTCLPAGVYCDVISGSLIDGSCTGKSVTVDGNGYGYIHIGSDDFDGVLALHVDARI</sequence>
<dbReference type="EC" id="3.2.1.1" evidence="2"/>
<dbReference type="EMBL" id="U96154">
    <property type="protein sequence ID" value="AAC39104.3"/>
    <property type="molecule type" value="Genomic_DNA"/>
</dbReference>
<dbReference type="SMR" id="O77011"/>
<dbReference type="CAZy" id="GH13">
    <property type="family name" value="Glycoside Hydrolase Family 13"/>
</dbReference>
<dbReference type="GO" id="GO:0005576">
    <property type="term" value="C:extracellular region"/>
    <property type="evidence" value="ECO:0007669"/>
    <property type="project" value="UniProtKB-SubCell"/>
</dbReference>
<dbReference type="GO" id="GO:0004556">
    <property type="term" value="F:alpha-amylase activity"/>
    <property type="evidence" value="ECO:0007669"/>
    <property type="project" value="UniProtKB-EC"/>
</dbReference>
<dbReference type="GO" id="GO:0046872">
    <property type="term" value="F:metal ion binding"/>
    <property type="evidence" value="ECO:0007669"/>
    <property type="project" value="UniProtKB-KW"/>
</dbReference>
<dbReference type="GO" id="GO:0005975">
    <property type="term" value="P:carbohydrate metabolic process"/>
    <property type="evidence" value="ECO:0007669"/>
    <property type="project" value="InterPro"/>
</dbReference>
<dbReference type="CDD" id="cd11317">
    <property type="entry name" value="AmyAc_bac_euk_AmyA"/>
    <property type="match status" value="1"/>
</dbReference>
<dbReference type="FunFam" id="3.20.20.80:FF:000119">
    <property type="entry name" value="Alpha-amylase-related protein"/>
    <property type="match status" value="1"/>
</dbReference>
<dbReference type="FunFam" id="2.60.40.1180:FF:000020">
    <property type="entry name" value="Pancreatic alpha-amylase"/>
    <property type="match status" value="1"/>
</dbReference>
<dbReference type="Gene3D" id="3.20.20.80">
    <property type="entry name" value="Glycosidases"/>
    <property type="match status" value="1"/>
</dbReference>
<dbReference type="Gene3D" id="2.60.40.1180">
    <property type="entry name" value="Golgi alpha-mannosidase II"/>
    <property type="match status" value="1"/>
</dbReference>
<dbReference type="InterPro" id="IPR006048">
    <property type="entry name" value="A-amylase/branching_C"/>
</dbReference>
<dbReference type="InterPro" id="IPR031319">
    <property type="entry name" value="A-amylase_C"/>
</dbReference>
<dbReference type="InterPro" id="IPR006046">
    <property type="entry name" value="Alpha_amylase"/>
</dbReference>
<dbReference type="InterPro" id="IPR006047">
    <property type="entry name" value="Glyco_hydro_13_cat_dom"/>
</dbReference>
<dbReference type="InterPro" id="IPR013780">
    <property type="entry name" value="Glyco_hydro_b"/>
</dbReference>
<dbReference type="InterPro" id="IPR017853">
    <property type="entry name" value="Glycoside_hydrolase_SF"/>
</dbReference>
<dbReference type="PANTHER" id="PTHR43447">
    <property type="entry name" value="ALPHA-AMYLASE"/>
    <property type="match status" value="1"/>
</dbReference>
<dbReference type="Pfam" id="PF00128">
    <property type="entry name" value="Alpha-amylase"/>
    <property type="match status" value="1"/>
</dbReference>
<dbReference type="Pfam" id="PF02806">
    <property type="entry name" value="Alpha-amylase_C"/>
    <property type="match status" value="1"/>
</dbReference>
<dbReference type="PRINTS" id="PR00110">
    <property type="entry name" value="ALPHAAMYLASE"/>
</dbReference>
<dbReference type="SMART" id="SM00642">
    <property type="entry name" value="Aamy"/>
    <property type="match status" value="1"/>
</dbReference>
<dbReference type="SMART" id="SM00632">
    <property type="entry name" value="Aamy_C"/>
    <property type="match status" value="1"/>
</dbReference>
<dbReference type="SUPFAM" id="SSF51445">
    <property type="entry name" value="(Trans)glycosidases"/>
    <property type="match status" value="1"/>
</dbReference>
<dbReference type="SUPFAM" id="SSF51011">
    <property type="entry name" value="Glycosyl hydrolase domain"/>
    <property type="match status" value="1"/>
</dbReference>
<proteinExistence type="inferred from homology"/>
<accession>O77011</accession>
<evidence type="ECO:0000250" key="1"/>
<evidence type="ECO:0000250" key="2">
    <source>
        <dbReference type="UniProtKB" id="P04746"/>
    </source>
</evidence>
<evidence type="ECO:0000250" key="3">
    <source>
        <dbReference type="UniProtKB" id="P56634"/>
    </source>
</evidence>
<evidence type="ECO:0000255" key="4"/>
<evidence type="ECO:0000305" key="5"/>
<comment type="catalytic activity">
    <reaction evidence="2">
        <text>Endohydrolysis of (1-&gt;4)-alpha-D-glucosidic linkages in polysaccharides containing three or more (1-&gt;4)-alpha-linked D-glucose units.</text>
        <dbReference type="EC" id="3.2.1.1"/>
    </reaction>
</comment>
<comment type="cofactor">
    <cofactor evidence="3">
        <name>Ca(2+)</name>
        <dbReference type="ChEBI" id="CHEBI:29108"/>
    </cofactor>
    <text evidence="3">Binds 1 Ca(2+) ion per subunit.</text>
</comment>
<comment type="cofactor">
    <cofactor evidence="3">
        <name>chloride</name>
        <dbReference type="ChEBI" id="CHEBI:17996"/>
    </cofactor>
    <text evidence="3">Binds 1 Cl(-) ion per subunit.</text>
</comment>
<comment type="subunit">
    <text evidence="1">Monomer.</text>
</comment>
<comment type="subcellular location">
    <subcellularLocation>
        <location evidence="5">Secreted</location>
    </subcellularLocation>
</comment>
<comment type="similarity">
    <text evidence="5">Belongs to the glycosyl hydrolase 13 family.</text>
</comment>
<keyword id="KW-0106">Calcium</keyword>
<keyword id="KW-0119">Carbohydrate metabolism</keyword>
<keyword id="KW-0868">Chloride</keyword>
<keyword id="KW-1015">Disulfide bond</keyword>
<keyword id="KW-0326">Glycosidase</keyword>
<keyword id="KW-0378">Hydrolase</keyword>
<keyword id="KW-0479">Metal-binding</keyword>
<keyword id="KW-0873">Pyrrolidone carboxylic acid</keyword>
<keyword id="KW-0964">Secreted</keyword>
<keyword id="KW-0732">Signal</keyword>
<feature type="signal peptide" evidence="1">
    <location>
        <begin position="1"/>
        <end position="20"/>
    </location>
</feature>
<feature type="chain" id="PRO_0000001369" description="Alpha-amylase-related protein">
    <location>
        <begin position="21"/>
        <end position="494"/>
    </location>
</feature>
<feature type="active site" description="Nucleophile" evidence="2">
    <location>
        <position position="208"/>
    </location>
</feature>
<feature type="active site" description="Proton donor" evidence="2">
    <location>
        <position position="245"/>
    </location>
</feature>
<feature type="binding site" evidence="3">
    <location>
        <position position="118"/>
    </location>
    <ligand>
        <name>Ca(2+)</name>
        <dbReference type="ChEBI" id="CHEBI:29108"/>
    </ligand>
</feature>
<feature type="binding site" evidence="3">
    <location>
        <position position="169"/>
    </location>
    <ligand>
        <name>Ca(2+)</name>
        <dbReference type="ChEBI" id="CHEBI:29108"/>
    </ligand>
</feature>
<feature type="binding site" evidence="3">
    <location>
        <position position="178"/>
    </location>
    <ligand>
        <name>Ca(2+)</name>
        <dbReference type="ChEBI" id="CHEBI:29108"/>
    </ligand>
</feature>
<feature type="binding site" evidence="3">
    <location>
        <position position="206"/>
    </location>
    <ligand>
        <name>chloride</name>
        <dbReference type="ChEBI" id="CHEBI:17996"/>
    </ligand>
</feature>
<feature type="binding site" evidence="3">
    <location>
        <position position="212"/>
    </location>
    <ligand>
        <name>Ca(2+)</name>
        <dbReference type="ChEBI" id="CHEBI:29108"/>
    </ligand>
</feature>
<feature type="binding site" evidence="3">
    <location>
        <position position="308"/>
    </location>
    <ligand>
        <name>chloride</name>
        <dbReference type="ChEBI" id="CHEBI:17996"/>
    </ligand>
</feature>
<feature type="binding site" evidence="3">
    <location>
        <position position="343"/>
    </location>
    <ligand>
        <name>chloride</name>
        <dbReference type="ChEBI" id="CHEBI:17996"/>
    </ligand>
</feature>
<feature type="site" description="Transition state stabilizer" evidence="2">
    <location>
        <position position="310"/>
    </location>
</feature>
<feature type="modified residue" description="Pyrrolidone carboxylic acid" evidence="1">
    <location>
        <position position="21"/>
    </location>
</feature>
<feature type="disulfide bond" evidence="3">
    <location>
        <begin position="48"/>
        <end position="104"/>
    </location>
</feature>
<feature type="disulfide bond" evidence="3">
    <location>
        <begin position="157"/>
        <end position="171"/>
    </location>
</feature>
<feature type="disulfide bond" evidence="3">
    <location>
        <begin position="376"/>
        <end position="382"/>
    </location>
</feature>
<feature type="disulfide bond" evidence="4">
    <location>
        <begin position="418"/>
        <end position="441"/>
    </location>
</feature>
<feature type="disulfide bond" evidence="3">
    <location>
        <begin position="448"/>
        <end position="460"/>
    </location>
</feature>
<protein>
    <recommendedName>
        <fullName>Alpha-amylase-related protein</fullName>
        <ecNumber evidence="2">3.2.1.1</ecNumber>
    </recommendedName>
</protein>
<name>AMYR_DROAP</name>
<reference key="1">
    <citation type="submission" date="2002-01" db="EMBL/GenBank/DDBJ databases">
        <authorList>
            <person name="Da Lage J.-L."/>
        </authorList>
    </citation>
    <scope>NUCLEOTIDE SEQUENCE [GENOMIC DNA]</scope>
</reference>